<comment type="function">
    <text evidence="1 2">Cilium- and flagellum-associated protein (By similarity). In the olfactory epithelium, regulates the speed of activation and termination of the odor response and thus contributes to the robustness of olfactory transduction pathways (By similarity). Required for sperm flagellum assembly and stability (By similarity).</text>
</comment>
<comment type="subcellular location">
    <subcellularLocation>
        <location evidence="2">Cell projection</location>
        <location evidence="2">Cilium</location>
    </subcellularLocation>
    <subcellularLocation>
        <location evidence="1">Cell projection</location>
        <location evidence="1">Cilium</location>
        <location evidence="1">Flagellum</location>
    </subcellularLocation>
    <text evidence="1">Localizes to the midpiece of the sperm flagellum.</text>
</comment>
<keyword id="KW-0966">Cell projection</keyword>
<keyword id="KW-0969">Cilium</keyword>
<keyword id="KW-0221">Differentiation</keyword>
<keyword id="KW-0282">Flagellum</keyword>
<keyword id="KW-0552">Olfaction</keyword>
<keyword id="KW-1185">Reference proteome</keyword>
<keyword id="KW-0716">Sensory transduction</keyword>
<keyword id="KW-0744">Spermatogenesis</keyword>
<proteinExistence type="inferred from homology"/>
<evidence type="ECO:0000250" key="1">
    <source>
        <dbReference type="UniProtKB" id="A5D8W1"/>
    </source>
</evidence>
<evidence type="ECO:0000250" key="2">
    <source>
        <dbReference type="UniProtKB" id="Q8BH53"/>
    </source>
</evidence>
<evidence type="ECO:0000256" key="3">
    <source>
        <dbReference type="SAM" id="MobiDB-lite"/>
    </source>
</evidence>
<evidence type="ECO:0000305" key="4"/>
<feature type="chain" id="PRO_0000366027" description="Cilia- and flagella-associated protein 69" evidence="4">
    <location>
        <begin position="1"/>
        <end position="941"/>
    </location>
</feature>
<feature type="region of interest" description="Disordered" evidence="3">
    <location>
        <begin position="1"/>
        <end position="23"/>
    </location>
</feature>
<feature type="compositionally biased region" description="Low complexity" evidence="3">
    <location>
        <begin position="1"/>
        <end position="10"/>
    </location>
</feature>
<sequence length="941" mass="105783">MWTEEAAATAEARESGIRNKSSSSSQIPVVGVVTEDNEAQGVFKPMDLNRVIKLLEETDKDGLEEKQLKFVKKLVQCFQNGLPLRDLAQIFKILNLCAGKIKNQPRFVESAYDIIKLCSLPFLKKKVSDEITYAEDTANSIALLGDLMKIPSSELRIQICKCIVDFYHAEPPKKHIPGYQQASSSYKIQMAEVGGLAKTMVQSITLLEHQLVEKLWVLKVLQHLSTSEVNCTIMMKAQAASGICTHLNDPDPSGQLLFRSSEILWNLLEKSSKEEVIQQLSNLECLLALKEVFTNLFMRGFSHYDRQLRNDILVITTIIAQNPEAPMIECGFTKDLILFATFNEVKSQNLLVKGLKLSNSYEDFELKKLLFNVIVILCKDLPTVQLLIDGKVILALFTYVKKPEKQKIMGWSAAQHEELQLHAIATLSSVAPLLIEEYMSCQGNARVLAFLEWCESEDPFFSHGNSFHGTGGRGNKFAQMRYSLRLLRAMVYLEDETVNTDLCEKGTIQQMIGIFKNIISKPNEKEEAIVLEIQSDILLILSGLCENHIQRKEIFGTEGVDIVLHVMKTDPRKLQSGLGYNLLLFSTLDSIWCCILGCYPSEDYFLEREGIFLLLDVLALNQKKFCNLILGIMVEFCDNPKTAAHVNAWQGKKDQTAASLLIKLWRKEEKELGVKRDKNGKIIDTKKPLFTSFQEEHKIIPLPANCPSIAVMDVSENIRAKIYAILGKLDFENLPGLSAEDFVTLCVIHRYLDFKIGEIWNEIYEEIKLEKLRPVTIDKKALEAITTASENVGKMVASLQSEIIESQARQDVQNEQKVYAKIQATHKQRELANKSWENFLARTSNAKTLKKAKRLQEKAIEASRYHKRPQNAVFHGTDIKGLNTTVPSGGVVTVESTPARLVGGPLADTDIALKKLPIRGGALQRVKAVEIVDAPKKSIPT</sequence>
<dbReference type="EMBL" id="DP000509">
    <property type="protein sequence ID" value="ABY63618.1"/>
    <property type="molecule type" value="Genomic_DNA"/>
</dbReference>
<dbReference type="SMR" id="B0CM26"/>
<dbReference type="STRING" id="9555.ENSPANP00000018629"/>
<dbReference type="eggNOG" id="ENOG502QV2V">
    <property type="taxonomic scope" value="Eukaryota"/>
</dbReference>
<dbReference type="Proteomes" id="UP000028761">
    <property type="component" value="Unplaced"/>
</dbReference>
<dbReference type="GO" id="GO:0005737">
    <property type="term" value="C:cytoplasm"/>
    <property type="evidence" value="ECO:0000250"/>
    <property type="project" value="UniProtKB"/>
</dbReference>
<dbReference type="GO" id="GO:0097730">
    <property type="term" value="C:non-motile cilium"/>
    <property type="evidence" value="ECO:0000250"/>
    <property type="project" value="UniProtKB"/>
</dbReference>
<dbReference type="GO" id="GO:0097225">
    <property type="term" value="C:sperm midpiece"/>
    <property type="evidence" value="ECO:0000250"/>
    <property type="project" value="UniProtKB"/>
</dbReference>
<dbReference type="GO" id="GO:0030154">
    <property type="term" value="P:cell differentiation"/>
    <property type="evidence" value="ECO:0007669"/>
    <property type="project" value="UniProtKB-KW"/>
</dbReference>
<dbReference type="GO" id="GO:0042048">
    <property type="term" value="P:olfactory behavior"/>
    <property type="evidence" value="ECO:0000250"/>
    <property type="project" value="UniProtKB"/>
</dbReference>
<dbReference type="GO" id="GO:1905516">
    <property type="term" value="P:positive regulation of fertilization"/>
    <property type="evidence" value="ECO:0000250"/>
    <property type="project" value="UniProtKB"/>
</dbReference>
<dbReference type="GO" id="GO:1902093">
    <property type="term" value="P:positive regulation of flagellated sperm motility"/>
    <property type="evidence" value="ECO:0000250"/>
    <property type="project" value="UniProtKB"/>
</dbReference>
<dbReference type="GO" id="GO:1990834">
    <property type="term" value="P:response to odorant"/>
    <property type="evidence" value="ECO:0000250"/>
    <property type="project" value="UniProtKB"/>
</dbReference>
<dbReference type="GO" id="GO:0007608">
    <property type="term" value="P:sensory perception of smell"/>
    <property type="evidence" value="ECO:0007669"/>
    <property type="project" value="UniProtKB-KW"/>
</dbReference>
<dbReference type="GO" id="GO:0007283">
    <property type="term" value="P:spermatogenesis"/>
    <property type="evidence" value="ECO:0007669"/>
    <property type="project" value="UniProtKB-KW"/>
</dbReference>
<dbReference type="Gene3D" id="1.25.10.10">
    <property type="entry name" value="Leucine-rich Repeat Variant"/>
    <property type="match status" value="1"/>
</dbReference>
<dbReference type="InterPro" id="IPR011989">
    <property type="entry name" value="ARM-like"/>
</dbReference>
<dbReference type="InterPro" id="IPR016024">
    <property type="entry name" value="ARM-type_fold"/>
</dbReference>
<dbReference type="InterPro" id="IPR048732">
    <property type="entry name" value="CFA69"/>
</dbReference>
<dbReference type="InterPro" id="IPR048733">
    <property type="entry name" value="CFA69_ARM_dom"/>
</dbReference>
<dbReference type="PANTHER" id="PTHR14716">
    <property type="entry name" value="CILIA- AND FLAGELLA-ASSOCIATED PROTEIN 69"/>
    <property type="match status" value="1"/>
</dbReference>
<dbReference type="PANTHER" id="PTHR14716:SF0">
    <property type="entry name" value="CILIA- AND FLAGELLA-ASSOCIATED PROTEIN 69"/>
    <property type="match status" value="1"/>
</dbReference>
<dbReference type="Pfam" id="PF21049">
    <property type="entry name" value="CFA69_ARM_rpt"/>
    <property type="match status" value="1"/>
</dbReference>
<dbReference type="SUPFAM" id="SSF48371">
    <property type="entry name" value="ARM repeat"/>
    <property type="match status" value="2"/>
</dbReference>
<gene>
    <name evidence="1" type="primary">CFAP69</name>
</gene>
<organism>
    <name type="scientific">Papio anubis</name>
    <name type="common">Olive baboon</name>
    <dbReference type="NCBI Taxonomy" id="9555"/>
    <lineage>
        <taxon>Eukaryota</taxon>
        <taxon>Metazoa</taxon>
        <taxon>Chordata</taxon>
        <taxon>Craniata</taxon>
        <taxon>Vertebrata</taxon>
        <taxon>Euteleostomi</taxon>
        <taxon>Mammalia</taxon>
        <taxon>Eutheria</taxon>
        <taxon>Euarchontoglires</taxon>
        <taxon>Primates</taxon>
        <taxon>Haplorrhini</taxon>
        <taxon>Catarrhini</taxon>
        <taxon>Cercopithecidae</taxon>
        <taxon>Cercopithecinae</taxon>
        <taxon>Papio</taxon>
    </lineage>
</organism>
<reference key="1">
    <citation type="submission" date="2008-01" db="EMBL/GenBank/DDBJ databases">
        <title>NISC comparative sequencing initiative.</title>
        <authorList>
            <person name="Antonellis A."/>
            <person name="Benjamin B."/>
            <person name="Blakesley R.W."/>
            <person name="Bouffard G.G."/>
            <person name="Brinkley C."/>
            <person name="Brooks S."/>
            <person name="Chu G."/>
            <person name="Chub I."/>
            <person name="Coleman H."/>
            <person name="Fuksenko T."/>
            <person name="Gestole M."/>
            <person name="Gregory M."/>
            <person name="Guan X."/>
            <person name="Gupta J."/>
            <person name="Gurson N."/>
            <person name="Han E."/>
            <person name="Han J."/>
            <person name="Hansen N."/>
            <person name="Hargrove A."/>
            <person name="Hines-Harris K."/>
            <person name="Ho S.-L."/>
            <person name="Hu P."/>
            <person name="Hunter G."/>
            <person name="Hurle B."/>
            <person name="Idol J.R."/>
            <person name="Johnson T."/>
            <person name="Knight E."/>
            <person name="Kwong P."/>
            <person name="Lee-Lin S.-Q."/>
            <person name="Legaspi R."/>
            <person name="Madden M."/>
            <person name="Maduro Q.L."/>
            <person name="Maduro V.B."/>
            <person name="Margulies E.H."/>
            <person name="Masiello C."/>
            <person name="Maskeri B."/>
            <person name="McDowell J."/>
            <person name="Merkulov G."/>
            <person name="Montemayor C."/>
            <person name="Mullikin J.C."/>
            <person name="Park M."/>
            <person name="Prasad A."/>
            <person name="Ramsahoye C."/>
            <person name="Reddix-Dugue N."/>
            <person name="Riebow N."/>
            <person name="Schandler K."/>
            <person name="Schueler M.G."/>
            <person name="Sison C."/>
            <person name="Smith L."/>
            <person name="Stantripop S."/>
            <person name="Thomas J.W."/>
            <person name="Thomas P.J."/>
            <person name="Tsipouri V."/>
            <person name="Young A."/>
            <person name="Green E.D."/>
        </authorList>
    </citation>
    <scope>NUCLEOTIDE SEQUENCE [LARGE SCALE GENOMIC DNA]</scope>
</reference>
<name>CFA69_PAPAN</name>
<protein>
    <recommendedName>
        <fullName evidence="1">Cilia- and flagella-associated protein 69</fullName>
    </recommendedName>
</protein>
<accession>B0CM26</accession>